<feature type="chain" id="PRO_0000350218" description="Dual-specificity RNA methyltransferase RlmN">
    <location>
        <begin position="1"/>
        <end position="387"/>
    </location>
</feature>
<feature type="domain" description="Radical SAM core" evidence="2">
    <location>
        <begin position="99"/>
        <end position="343"/>
    </location>
</feature>
<feature type="active site" description="Proton acceptor" evidence="1">
    <location>
        <position position="93"/>
    </location>
</feature>
<feature type="active site" description="S-methylcysteine intermediate" evidence="1">
    <location>
        <position position="348"/>
    </location>
</feature>
<feature type="binding site" evidence="1">
    <location>
        <position position="113"/>
    </location>
    <ligand>
        <name>[4Fe-4S] cluster</name>
        <dbReference type="ChEBI" id="CHEBI:49883"/>
        <note>4Fe-4S-S-AdoMet</note>
    </ligand>
</feature>
<feature type="binding site" evidence="1">
    <location>
        <position position="117"/>
    </location>
    <ligand>
        <name>[4Fe-4S] cluster</name>
        <dbReference type="ChEBI" id="CHEBI:49883"/>
        <note>4Fe-4S-S-AdoMet</note>
    </ligand>
</feature>
<feature type="binding site" evidence="1">
    <location>
        <position position="120"/>
    </location>
    <ligand>
        <name>[4Fe-4S] cluster</name>
        <dbReference type="ChEBI" id="CHEBI:49883"/>
        <note>4Fe-4S-S-AdoMet</note>
    </ligand>
</feature>
<feature type="binding site" evidence="1">
    <location>
        <begin position="172"/>
        <end position="173"/>
    </location>
    <ligand>
        <name>S-adenosyl-L-methionine</name>
        <dbReference type="ChEBI" id="CHEBI:59789"/>
    </ligand>
</feature>
<feature type="binding site" evidence="1">
    <location>
        <position position="204"/>
    </location>
    <ligand>
        <name>S-adenosyl-L-methionine</name>
        <dbReference type="ChEBI" id="CHEBI:59789"/>
    </ligand>
</feature>
<feature type="binding site" evidence="1">
    <location>
        <begin position="226"/>
        <end position="228"/>
    </location>
    <ligand>
        <name>S-adenosyl-L-methionine</name>
        <dbReference type="ChEBI" id="CHEBI:59789"/>
    </ligand>
</feature>
<feature type="binding site" evidence="1">
    <location>
        <position position="305"/>
    </location>
    <ligand>
        <name>S-adenosyl-L-methionine</name>
        <dbReference type="ChEBI" id="CHEBI:59789"/>
    </ligand>
</feature>
<feature type="disulfide bond" description="(transient)" evidence="1">
    <location>
        <begin position="106"/>
        <end position="348"/>
    </location>
</feature>
<comment type="function">
    <text evidence="1">Specifically methylates position 2 of adenine 2503 in 23S rRNA and position 2 of adenine 37 in tRNAs. m2A2503 modification seems to play a crucial role in the proofreading step occurring at the peptidyl transferase center and thus would serve to optimize ribosomal fidelity.</text>
</comment>
<comment type="catalytic activity">
    <reaction evidence="1">
        <text>adenosine(2503) in 23S rRNA + 2 reduced [2Fe-2S]-[ferredoxin] + 2 S-adenosyl-L-methionine = 2-methyladenosine(2503) in 23S rRNA + 5'-deoxyadenosine + L-methionine + 2 oxidized [2Fe-2S]-[ferredoxin] + S-adenosyl-L-homocysteine</text>
        <dbReference type="Rhea" id="RHEA:42916"/>
        <dbReference type="Rhea" id="RHEA-COMP:10000"/>
        <dbReference type="Rhea" id="RHEA-COMP:10001"/>
        <dbReference type="Rhea" id="RHEA-COMP:10152"/>
        <dbReference type="Rhea" id="RHEA-COMP:10282"/>
        <dbReference type="ChEBI" id="CHEBI:17319"/>
        <dbReference type="ChEBI" id="CHEBI:33737"/>
        <dbReference type="ChEBI" id="CHEBI:33738"/>
        <dbReference type="ChEBI" id="CHEBI:57844"/>
        <dbReference type="ChEBI" id="CHEBI:57856"/>
        <dbReference type="ChEBI" id="CHEBI:59789"/>
        <dbReference type="ChEBI" id="CHEBI:74411"/>
        <dbReference type="ChEBI" id="CHEBI:74497"/>
        <dbReference type="EC" id="2.1.1.192"/>
    </reaction>
</comment>
<comment type="catalytic activity">
    <reaction evidence="1">
        <text>adenosine(37) in tRNA + 2 reduced [2Fe-2S]-[ferredoxin] + 2 S-adenosyl-L-methionine = 2-methyladenosine(37) in tRNA + 5'-deoxyadenosine + L-methionine + 2 oxidized [2Fe-2S]-[ferredoxin] + S-adenosyl-L-homocysteine</text>
        <dbReference type="Rhea" id="RHEA:43332"/>
        <dbReference type="Rhea" id="RHEA-COMP:10000"/>
        <dbReference type="Rhea" id="RHEA-COMP:10001"/>
        <dbReference type="Rhea" id="RHEA-COMP:10162"/>
        <dbReference type="Rhea" id="RHEA-COMP:10485"/>
        <dbReference type="ChEBI" id="CHEBI:17319"/>
        <dbReference type="ChEBI" id="CHEBI:33737"/>
        <dbReference type="ChEBI" id="CHEBI:33738"/>
        <dbReference type="ChEBI" id="CHEBI:57844"/>
        <dbReference type="ChEBI" id="CHEBI:57856"/>
        <dbReference type="ChEBI" id="CHEBI:59789"/>
        <dbReference type="ChEBI" id="CHEBI:74411"/>
        <dbReference type="ChEBI" id="CHEBI:74497"/>
        <dbReference type="EC" id="2.1.1.192"/>
    </reaction>
</comment>
<comment type="cofactor">
    <cofactor evidence="1">
        <name>[4Fe-4S] cluster</name>
        <dbReference type="ChEBI" id="CHEBI:49883"/>
    </cofactor>
    <text evidence="1">Binds 1 [4Fe-4S] cluster. The cluster is coordinated with 3 cysteines and an exchangeable S-adenosyl-L-methionine.</text>
</comment>
<comment type="subcellular location">
    <subcellularLocation>
        <location evidence="1">Cytoplasm</location>
    </subcellularLocation>
</comment>
<comment type="miscellaneous">
    <text evidence="1">Reaction proceeds by a ping-pong mechanism involving intermediate methylation of a conserved cysteine residue.</text>
</comment>
<comment type="similarity">
    <text evidence="1">Belongs to the radical SAM superfamily. RlmN family.</text>
</comment>
<organism>
    <name type="scientific">Janthinobacterium sp. (strain Marseille)</name>
    <name type="common">Minibacterium massiliensis</name>
    <dbReference type="NCBI Taxonomy" id="375286"/>
    <lineage>
        <taxon>Bacteria</taxon>
        <taxon>Pseudomonadati</taxon>
        <taxon>Pseudomonadota</taxon>
        <taxon>Betaproteobacteria</taxon>
        <taxon>Burkholderiales</taxon>
        <taxon>Oxalobacteraceae</taxon>
        <taxon>Janthinobacterium</taxon>
    </lineage>
</organism>
<keyword id="KW-0004">4Fe-4S</keyword>
<keyword id="KW-0963">Cytoplasm</keyword>
<keyword id="KW-1015">Disulfide bond</keyword>
<keyword id="KW-0408">Iron</keyword>
<keyword id="KW-0411">Iron-sulfur</keyword>
<keyword id="KW-0479">Metal-binding</keyword>
<keyword id="KW-0489">Methyltransferase</keyword>
<keyword id="KW-0698">rRNA processing</keyword>
<keyword id="KW-0949">S-adenosyl-L-methionine</keyword>
<keyword id="KW-0808">Transferase</keyword>
<keyword id="KW-0819">tRNA processing</keyword>
<proteinExistence type="inferred from homology"/>
<evidence type="ECO:0000255" key="1">
    <source>
        <dbReference type="HAMAP-Rule" id="MF_01849"/>
    </source>
</evidence>
<evidence type="ECO:0000255" key="2">
    <source>
        <dbReference type="PROSITE-ProRule" id="PRU01266"/>
    </source>
</evidence>
<reference key="1">
    <citation type="journal article" date="2007" name="PLoS Genet.">
        <title>Genome analysis of Minibacterium massiliensis highlights the convergent evolution of water-living bacteria.</title>
        <authorList>
            <person name="Audic S."/>
            <person name="Robert C."/>
            <person name="Campagna B."/>
            <person name="Parinello H."/>
            <person name="Claverie J.-M."/>
            <person name="Raoult D."/>
            <person name="Drancourt M."/>
        </authorList>
    </citation>
    <scope>NUCLEOTIDE SEQUENCE [LARGE SCALE GENOMIC DNA]</scope>
    <source>
        <strain>Marseille</strain>
    </source>
</reference>
<accession>A6SZX3</accession>
<sequence length="387" mass="42797">MTTLTNLLDLDPAQLIAYCGELGEKPFRAKQLQRWIHQFGASDFDAMTDLAKSLRDKLATRAIIAAPAVISDHTSADGTRKWLVDVGQGNAVETVFIPEENRGTLCISTQAGCAVNCRFCSTGKQGFNRNLSVGEVIGQLWMAEFELRRTKGIEPGPKGERQITNVVMMGMGEPLLNYEPTVTALKLMLDDNAYGLSRRRVTLSTSGVVPMIDKLSQDCAVALAVSLHASNDALRDGLVPLNKKYPLVELMAACKRYLEFAPRDFVTFEYCMLDGVNDSDQHARELIALVRQADVPCKFNLIPFNPFPESGLTRSHNPRIKAFAQVLMDAGIVTTVRKTRGDDIDAACGQLAGEVQDRTRVQDRMKKMAEYQEKFGKNFGRIVEISS</sequence>
<protein>
    <recommendedName>
        <fullName evidence="1">Dual-specificity RNA methyltransferase RlmN</fullName>
        <ecNumber evidence="1">2.1.1.192</ecNumber>
    </recommendedName>
    <alternativeName>
        <fullName evidence="1">23S rRNA (adenine(2503)-C(2))-methyltransferase</fullName>
    </alternativeName>
    <alternativeName>
        <fullName evidence="1">23S rRNA m2A2503 methyltransferase</fullName>
    </alternativeName>
    <alternativeName>
        <fullName evidence="1">Ribosomal RNA large subunit methyltransferase N</fullName>
    </alternativeName>
    <alternativeName>
        <fullName evidence="1">tRNA (adenine(37)-C(2))-methyltransferase</fullName>
    </alternativeName>
    <alternativeName>
        <fullName evidence="1">tRNA m2A37 methyltransferase</fullName>
    </alternativeName>
</protein>
<name>RLMN_JANMA</name>
<dbReference type="EC" id="2.1.1.192" evidence="1"/>
<dbReference type="EMBL" id="CP000269">
    <property type="protein sequence ID" value="ABR89366.1"/>
    <property type="molecule type" value="Genomic_DNA"/>
</dbReference>
<dbReference type="RefSeq" id="WP_012079983.1">
    <property type="nucleotide sequence ID" value="NC_009659.1"/>
</dbReference>
<dbReference type="SMR" id="A6SZX3"/>
<dbReference type="STRING" id="375286.mma_2130"/>
<dbReference type="KEGG" id="mms:mma_2130"/>
<dbReference type="eggNOG" id="COG0820">
    <property type="taxonomic scope" value="Bacteria"/>
</dbReference>
<dbReference type="HOGENOM" id="CLU_029101_0_0_4"/>
<dbReference type="OrthoDB" id="9793973at2"/>
<dbReference type="Proteomes" id="UP000006388">
    <property type="component" value="Chromosome"/>
</dbReference>
<dbReference type="GO" id="GO:0005737">
    <property type="term" value="C:cytoplasm"/>
    <property type="evidence" value="ECO:0007669"/>
    <property type="project" value="UniProtKB-SubCell"/>
</dbReference>
<dbReference type="GO" id="GO:0051539">
    <property type="term" value="F:4 iron, 4 sulfur cluster binding"/>
    <property type="evidence" value="ECO:0007669"/>
    <property type="project" value="UniProtKB-UniRule"/>
</dbReference>
<dbReference type="GO" id="GO:0046872">
    <property type="term" value="F:metal ion binding"/>
    <property type="evidence" value="ECO:0007669"/>
    <property type="project" value="UniProtKB-KW"/>
</dbReference>
<dbReference type="GO" id="GO:0070040">
    <property type="term" value="F:rRNA (adenine(2503)-C2-)-methyltransferase activity"/>
    <property type="evidence" value="ECO:0007669"/>
    <property type="project" value="UniProtKB-UniRule"/>
</dbReference>
<dbReference type="GO" id="GO:0019843">
    <property type="term" value="F:rRNA binding"/>
    <property type="evidence" value="ECO:0007669"/>
    <property type="project" value="UniProtKB-UniRule"/>
</dbReference>
<dbReference type="GO" id="GO:0002935">
    <property type="term" value="F:tRNA (adenine(37)-C2)-methyltransferase activity"/>
    <property type="evidence" value="ECO:0007669"/>
    <property type="project" value="UniProtKB-UniRule"/>
</dbReference>
<dbReference type="GO" id="GO:0000049">
    <property type="term" value="F:tRNA binding"/>
    <property type="evidence" value="ECO:0007669"/>
    <property type="project" value="UniProtKB-UniRule"/>
</dbReference>
<dbReference type="GO" id="GO:0070475">
    <property type="term" value="P:rRNA base methylation"/>
    <property type="evidence" value="ECO:0007669"/>
    <property type="project" value="UniProtKB-UniRule"/>
</dbReference>
<dbReference type="GO" id="GO:0030488">
    <property type="term" value="P:tRNA methylation"/>
    <property type="evidence" value="ECO:0007669"/>
    <property type="project" value="UniProtKB-UniRule"/>
</dbReference>
<dbReference type="CDD" id="cd01335">
    <property type="entry name" value="Radical_SAM"/>
    <property type="match status" value="1"/>
</dbReference>
<dbReference type="FunFam" id="1.10.150.530:FF:000003">
    <property type="entry name" value="Dual-specificity RNA methyltransferase RlmN"/>
    <property type="match status" value="1"/>
</dbReference>
<dbReference type="FunFam" id="3.20.20.70:FF:000008">
    <property type="entry name" value="Dual-specificity RNA methyltransferase RlmN"/>
    <property type="match status" value="1"/>
</dbReference>
<dbReference type="Gene3D" id="1.10.150.530">
    <property type="match status" value="1"/>
</dbReference>
<dbReference type="Gene3D" id="3.20.20.70">
    <property type="entry name" value="Aldolase class I"/>
    <property type="match status" value="1"/>
</dbReference>
<dbReference type="HAMAP" id="MF_01849">
    <property type="entry name" value="RNA_methyltr_RlmN"/>
    <property type="match status" value="1"/>
</dbReference>
<dbReference type="InterPro" id="IPR013785">
    <property type="entry name" value="Aldolase_TIM"/>
</dbReference>
<dbReference type="InterPro" id="IPR040072">
    <property type="entry name" value="Methyltransferase_A"/>
</dbReference>
<dbReference type="InterPro" id="IPR048641">
    <property type="entry name" value="RlmN_N"/>
</dbReference>
<dbReference type="InterPro" id="IPR027492">
    <property type="entry name" value="RNA_MTrfase_RlmN"/>
</dbReference>
<dbReference type="InterPro" id="IPR004383">
    <property type="entry name" value="rRNA_lsu_MTrfase_RlmN/Cfr"/>
</dbReference>
<dbReference type="InterPro" id="IPR007197">
    <property type="entry name" value="rSAM"/>
</dbReference>
<dbReference type="NCBIfam" id="TIGR00048">
    <property type="entry name" value="rRNA_mod_RlmN"/>
    <property type="match status" value="1"/>
</dbReference>
<dbReference type="PANTHER" id="PTHR30544">
    <property type="entry name" value="23S RRNA METHYLTRANSFERASE"/>
    <property type="match status" value="1"/>
</dbReference>
<dbReference type="PANTHER" id="PTHR30544:SF5">
    <property type="entry name" value="RADICAL SAM CORE DOMAIN-CONTAINING PROTEIN"/>
    <property type="match status" value="1"/>
</dbReference>
<dbReference type="Pfam" id="PF04055">
    <property type="entry name" value="Radical_SAM"/>
    <property type="match status" value="1"/>
</dbReference>
<dbReference type="Pfam" id="PF21016">
    <property type="entry name" value="RlmN_N"/>
    <property type="match status" value="1"/>
</dbReference>
<dbReference type="PIRSF" id="PIRSF006004">
    <property type="entry name" value="CHP00048"/>
    <property type="match status" value="1"/>
</dbReference>
<dbReference type="SFLD" id="SFLDF00275">
    <property type="entry name" value="adenosine_C2_methyltransferase"/>
    <property type="match status" value="1"/>
</dbReference>
<dbReference type="SFLD" id="SFLDG01062">
    <property type="entry name" value="methyltransferase_(Class_A)"/>
    <property type="match status" value="1"/>
</dbReference>
<dbReference type="SUPFAM" id="SSF102114">
    <property type="entry name" value="Radical SAM enzymes"/>
    <property type="match status" value="1"/>
</dbReference>
<dbReference type="PROSITE" id="PS51918">
    <property type="entry name" value="RADICAL_SAM"/>
    <property type="match status" value="1"/>
</dbReference>
<gene>
    <name evidence="1" type="primary">rlmN</name>
    <name type="ordered locus">mma_2130</name>
</gene>